<keyword id="KW-0963">Cytoplasm</keyword>
<keyword id="KW-0251">Elongation factor</keyword>
<keyword id="KW-0648">Protein biosynthesis</keyword>
<evidence type="ECO:0000255" key="1">
    <source>
        <dbReference type="HAMAP-Rule" id="MF_00141"/>
    </source>
</evidence>
<name>EFP_BORBR</name>
<comment type="function">
    <text evidence="1">Involved in peptide bond synthesis. Stimulates efficient translation and peptide-bond synthesis on native or reconstituted 70S ribosomes in vitro. Probably functions indirectly by altering the affinity of the ribosome for aminoacyl-tRNA, thus increasing their reactivity as acceptors for peptidyl transferase.</text>
</comment>
<comment type="pathway">
    <text evidence="1">Protein biosynthesis; polypeptide chain elongation.</text>
</comment>
<comment type="subcellular location">
    <subcellularLocation>
        <location evidence="1">Cytoplasm</location>
    </subcellularLocation>
</comment>
<comment type="similarity">
    <text evidence="1">Belongs to the elongation factor P family.</text>
</comment>
<protein>
    <recommendedName>
        <fullName evidence="1">Elongation factor P</fullName>
        <shortName evidence="1">EF-P</shortName>
    </recommendedName>
</protein>
<accession>Q7WLA9</accession>
<proteinExistence type="inferred from homology"/>
<sequence>MKTAQELRVGNVIMVGKDPLVVQKTEYNKSGRNAAVVKLKFKNLLTGSGSESVYKADEKFDVVVLERKECTYSYFGDPMYVFMDEEYNQYEIEADSMGDALNYLEEAMPVEVVFYDGRAISVELPTILVREITYTEPAVRGDTSGKVLKPAKINTGFELSVPLFCAIGDKIEIDTRTNEYRSRVN</sequence>
<dbReference type="EMBL" id="BX640442">
    <property type="protein sequence ID" value="CAE32337.1"/>
    <property type="molecule type" value="Genomic_DNA"/>
</dbReference>
<dbReference type="RefSeq" id="WP_003810194.1">
    <property type="nucleotide sequence ID" value="NC_002927.3"/>
</dbReference>
<dbReference type="SMR" id="Q7WLA9"/>
<dbReference type="GeneID" id="93204170"/>
<dbReference type="KEGG" id="bbr:BB1840"/>
<dbReference type="eggNOG" id="COG0231">
    <property type="taxonomic scope" value="Bacteria"/>
</dbReference>
<dbReference type="HOGENOM" id="CLU_074944_2_1_4"/>
<dbReference type="UniPathway" id="UPA00345"/>
<dbReference type="Proteomes" id="UP000001027">
    <property type="component" value="Chromosome"/>
</dbReference>
<dbReference type="GO" id="GO:0005737">
    <property type="term" value="C:cytoplasm"/>
    <property type="evidence" value="ECO:0007669"/>
    <property type="project" value="UniProtKB-SubCell"/>
</dbReference>
<dbReference type="GO" id="GO:0003746">
    <property type="term" value="F:translation elongation factor activity"/>
    <property type="evidence" value="ECO:0007669"/>
    <property type="project" value="UniProtKB-UniRule"/>
</dbReference>
<dbReference type="GO" id="GO:0043043">
    <property type="term" value="P:peptide biosynthetic process"/>
    <property type="evidence" value="ECO:0007669"/>
    <property type="project" value="InterPro"/>
</dbReference>
<dbReference type="CDD" id="cd04470">
    <property type="entry name" value="S1_EF-P_repeat_1"/>
    <property type="match status" value="1"/>
</dbReference>
<dbReference type="CDD" id="cd05794">
    <property type="entry name" value="S1_EF-P_repeat_2"/>
    <property type="match status" value="1"/>
</dbReference>
<dbReference type="FunFam" id="2.30.30.30:FF:000003">
    <property type="entry name" value="Elongation factor P"/>
    <property type="match status" value="1"/>
</dbReference>
<dbReference type="FunFam" id="2.40.50.140:FF:000004">
    <property type="entry name" value="Elongation factor P"/>
    <property type="match status" value="1"/>
</dbReference>
<dbReference type="FunFam" id="2.40.50.140:FF:000009">
    <property type="entry name" value="Elongation factor P"/>
    <property type="match status" value="1"/>
</dbReference>
<dbReference type="Gene3D" id="2.30.30.30">
    <property type="match status" value="1"/>
</dbReference>
<dbReference type="Gene3D" id="2.40.50.140">
    <property type="entry name" value="Nucleic acid-binding proteins"/>
    <property type="match status" value="2"/>
</dbReference>
<dbReference type="HAMAP" id="MF_00141">
    <property type="entry name" value="EF_P"/>
    <property type="match status" value="1"/>
</dbReference>
<dbReference type="InterPro" id="IPR015365">
    <property type="entry name" value="Elong-fact-P_C"/>
</dbReference>
<dbReference type="InterPro" id="IPR012340">
    <property type="entry name" value="NA-bd_OB-fold"/>
</dbReference>
<dbReference type="InterPro" id="IPR014722">
    <property type="entry name" value="Rib_uL2_dom2"/>
</dbReference>
<dbReference type="InterPro" id="IPR020599">
    <property type="entry name" value="Transl_elong_fac_P/YeiP"/>
</dbReference>
<dbReference type="InterPro" id="IPR013185">
    <property type="entry name" value="Transl_elong_KOW-like"/>
</dbReference>
<dbReference type="InterPro" id="IPR001059">
    <property type="entry name" value="Transl_elong_P/YeiP_cen"/>
</dbReference>
<dbReference type="InterPro" id="IPR013852">
    <property type="entry name" value="Transl_elong_P/YeiP_CS"/>
</dbReference>
<dbReference type="InterPro" id="IPR011768">
    <property type="entry name" value="Transl_elongation_fac_P"/>
</dbReference>
<dbReference type="InterPro" id="IPR008991">
    <property type="entry name" value="Translation_prot_SH3-like_sf"/>
</dbReference>
<dbReference type="NCBIfam" id="TIGR00038">
    <property type="entry name" value="efp"/>
    <property type="match status" value="1"/>
</dbReference>
<dbReference type="NCBIfam" id="NF001810">
    <property type="entry name" value="PRK00529.1"/>
    <property type="match status" value="1"/>
</dbReference>
<dbReference type="PANTHER" id="PTHR30053">
    <property type="entry name" value="ELONGATION FACTOR P"/>
    <property type="match status" value="1"/>
</dbReference>
<dbReference type="PANTHER" id="PTHR30053:SF12">
    <property type="entry name" value="ELONGATION FACTOR P (EF-P) FAMILY PROTEIN"/>
    <property type="match status" value="1"/>
</dbReference>
<dbReference type="Pfam" id="PF01132">
    <property type="entry name" value="EFP"/>
    <property type="match status" value="1"/>
</dbReference>
<dbReference type="Pfam" id="PF08207">
    <property type="entry name" value="EFP_N"/>
    <property type="match status" value="1"/>
</dbReference>
<dbReference type="Pfam" id="PF09285">
    <property type="entry name" value="Elong-fact-P_C"/>
    <property type="match status" value="1"/>
</dbReference>
<dbReference type="PIRSF" id="PIRSF005901">
    <property type="entry name" value="EF-P"/>
    <property type="match status" value="1"/>
</dbReference>
<dbReference type="SMART" id="SM01185">
    <property type="entry name" value="EFP"/>
    <property type="match status" value="1"/>
</dbReference>
<dbReference type="SMART" id="SM00841">
    <property type="entry name" value="Elong-fact-P_C"/>
    <property type="match status" value="1"/>
</dbReference>
<dbReference type="SUPFAM" id="SSF50249">
    <property type="entry name" value="Nucleic acid-binding proteins"/>
    <property type="match status" value="2"/>
</dbReference>
<dbReference type="SUPFAM" id="SSF50104">
    <property type="entry name" value="Translation proteins SH3-like domain"/>
    <property type="match status" value="1"/>
</dbReference>
<dbReference type="PROSITE" id="PS01275">
    <property type="entry name" value="EFP"/>
    <property type="match status" value="1"/>
</dbReference>
<feature type="chain" id="PRO_0000094205" description="Elongation factor P">
    <location>
        <begin position="1"/>
        <end position="185"/>
    </location>
</feature>
<gene>
    <name evidence="1" type="primary">efp</name>
    <name type="ordered locus">BB1840</name>
</gene>
<reference key="1">
    <citation type="journal article" date="2003" name="Nat. Genet.">
        <title>Comparative analysis of the genome sequences of Bordetella pertussis, Bordetella parapertussis and Bordetella bronchiseptica.</title>
        <authorList>
            <person name="Parkhill J."/>
            <person name="Sebaihia M."/>
            <person name="Preston A."/>
            <person name="Murphy L.D."/>
            <person name="Thomson N.R."/>
            <person name="Harris D.E."/>
            <person name="Holden M.T.G."/>
            <person name="Churcher C.M."/>
            <person name="Bentley S.D."/>
            <person name="Mungall K.L."/>
            <person name="Cerdeno-Tarraga A.-M."/>
            <person name="Temple L."/>
            <person name="James K.D."/>
            <person name="Harris B."/>
            <person name="Quail M.A."/>
            <person name="Achtman M."/>
            <person name="Atkin R."/>
            <person name="Baker S."/>
            <person name="Basham D."/>
            <person name="Bason N."/>
            <person name="Cherevach I."/>
            <person name="Chillingworth T."/>
            <person name="Collins M."/>
            <person name="Cronin A."/>
            <person name="Davis P."/>
            <person name="Doggett J."/>
            <person name="Feltwell T."/>
            <person name="Goble A."/>
            <person name="Hamlin N."/>
            <person name="Hauser H."/>
            <person name="Holroyd S."/>
            <person name="Jagels K."/>
            <person name="Leather S."/>
            <person name="Moule S."/>
            <person name="Norberczak H."/>
            <person name="O'Neil S."/>
            <person name="Ormond D."/>
            <person name="Price C."/>
            <person name="Rabbinowitsch E."/>
            <person name="Rutter S."/>
            <person name="Sanders M."/>
            <person name="Saunders D."/>
            <person name="Seeger K."/>
            <person name="Sharp S."/>
            <person name="Simmonds M."/>
            <person name="Skelton J."/>
            <person name="Squares R."/>
            <person name="Squares S."/>
            <person name="Stevens K."/>
            <person name="Unwin L."/>
            <person name="Whitehead S."/>
            <person name="Barrell B.G."/>
            <person name="Maskell D.J."/>
        </authorList>
    </citation>
    <scope>NUCLEOTIDE SEQUENCE [LARGE SCALE GENOMIC DNA]</scope>
    <source>
        <strain>ATCC BAA-588 / NCTC 13252 / RB50</strain>
    </source>
</reference>
<organism>
    <name type="scientific">Bordetella bronchiseptica (strain ATCC BAA-588 / NCTC 13252 / RB50)</name>
    <name type="common">Alcaligenes bronchisepticus</name>
    <dbReference type="NCBI Taxonomy" id="257310"/>
    <lineage>
        <taxon>Bacteria</taxon>
        <taxon>Pseudomonadati</taxon>
        <taxon>Pseudomonadota</taxon>
        <taxon>Betaproteobacteria</taxon>
        <taxon>Burkholderiales</taxon>
        <taxon>Alcaligenaceae</taxon>
        <taxon>Bordetella</taxon>
    </lineage>
</organism>